<accession>B2V1V3</accession>
<gene>
    <name evidence="1" type="primary">rnpA</name>
    <name type="ordered locus">CLH_3397</name>
</gene>
<keyword id="KW-0255">Endonuclease</keyword>
<keyword id="KW-0378">Hydrolase</keyword>
<keyword id="KW-0540">Nuclease</keyword>
<keyword id="KW-0694">RNA-binding</keyword>
<keyword id="KW-0819">tRNA processing</keyword>
<reference key="1">
    <citation type="submission" date="2008-05" db="EMBL/GenBank/DDBJ databases">
        <title>Complete genome sequence of Clostridium botulinum E3 str. Alaska E43.</title>
        <authorList>
            <person name="Brinkac L.M."/>
            <person name="Brown J.L."/>
            <person name="Bruce D."/>
            <person name="Detter C."/>
            <person name="Munk C."/>
            <person name="Smith L.A."/>
            <person name="Smith T.J."/>
            <person name="Sutton G."/>
            <person name="Brettin T.S."/>
        </authorList>
    </citation>
    <scope>NUCLEOTIDE SEQUENCE [LARGE SCALE GENOMIC DNA]</scope>
    <source>
        <strain>Alaska E43 / Type E3</strain>
    </source>
</reference>
<protein>
    <recommendedName>
        <fullName evidence="1">Ribonuclease P protein component</fullName>
        <shortName evidence="1">RNase P protein</shortName>
        <shortName evidence="1">RNaseP protein</shortName>
        <ecNumber evidence="1">3.1.26.5</ecNumber>
    </recommendedName>
    <alternativeName>
        <fullName evidence="1">Protein C5</fullName>
    </alternativeName>
</protein>
<sequence>MIYRLKKNIEFIIVYRRGKSFANKTLVLYVLKNKRNKDKDGIAYSKVGISVSKKVGNSVVRSKCKRLLSESFRLNYNNILKGYDCVFVARNPMRDSDYFETEKAMKNLIKKAGLYYDEENGIKSN</sequence>
<feature type="chain" id="PRO_1000100350" description="Ribonuclease P protein component">
    <location>
        <begin position="1"/>
        <end position="125"/>
    </location>
</feature>
<name>RNPA_CLOBA</name>
<dbReference type="EC" id="3.1.26.5" evidence="1"/>
<dbReference type="EMBL" id="CP001078">
    <property type="protein sequence ID" value="ACD51062.1"/>
    <property type="molecule type" value="Genomic_DNA"/>
</dbReference>
<dbReference type="RefSeq" id="WP_003374694.1">
    <property type="nucleotide sequence ID" value="NC_010723.1"/>
</dbReference>
<dbReference type="SMR" id="B2V1V3"/>
<dbReference type="KEGG" id="cbt:CLH_3397"/>
<dbReference type="HOGENOM" id="CLU_117179_9_1_9"/>
<dbReference type="GO" id="GO:0030677">
    <property type="term" value="C:ribonuclease P complex"/>
    <property type="evidence" value="ECO:0007669"/>
    <property type="project" value="TreeGrafter"/>
</dbReference>
<dbReference type="GO" id="GO:0042781">
    <property type="term" value="F:3'-tRNA processing endoribonuclease activity"/>
    <property type="evidence" value="ECO:0007669"/>
    <property type="project" value="TreeGrafter"/>
</dbReference>
<dbReference type="GO" id="GO:0004526">
    <property type="term" value="F:ribonuclease P activity"/>
    <property type="evidence" value="ECO:0007669"/>
    <property type="project" value="UniProtKB-UniRule"/>
</dbReference>
<dbReference type="GO" id="GO:0000049">
    <property type="term" value="F:tRNA binding"/>
    <property type="evidence" value="ECO:0007669"/>
    <property type="project" value="UniProtKB-UniRule"/>
</dbReference>
<dbReference type="GO" id="GO:0001682">
    <property type="term" value="P:tRNA 5'-leader removal"/>
    <property type="evidence" value="ECO:0007669"/>
    <property type="project" value="UniProtKB-UniRule"/>
</dbReference>
<dbReference type="Gene3D" id="3.30.230.10">
    <property type="match status" value="1"/>
</dbReference>
<dbReference type="HAMAP" id="MF_00227">
    <property type="entry name" value="RNase_P"/>
    <property type="match status" value="1"/>
</dbReference>
<dbReference type="InterPro" id="IPR020568">
    <property type="entry name" value="Ribosomal_Su5_D2-typ_SF"/>
</dbReference>
<dbReference type="InterPro" id="IPR014721">
    <property type="entry name" value="Ribsml_uS5_D2-typ_fold_subgr"/>
</dbReference>
<dbReference type="InterPro" id="IPR000100">
    <property type="entry name" value="RNase_P"/>
</dbReference>
<dbReference type="NCBIfam" id="TIGR00188">
    <property type="entry name" value="rnpA"/>
    <property type="match status" value="1"/>
</dbReference>
<dbReference type="PANTHER" id="PTHR33992">
    <property type="entry name" value="RIBONUCLEASE P PROTEIN COMPONENT"/>
    <property type="match status" value="1"/>
</dbReference>
<dbReference type="PANTHER" id="PTHR33992:SF1">
    <property type="entry name" value="RIBONUCLEASE P PROTEIN COMPONENT"/>
    <property type="match status" value="1"/>
</dbReference>
<dbReference type="Pfam" id="PF00825">
    <property type="entry name" value="Ribonuclease_P"/>
    <property type="match status" value="1"/>
</dbReference>
<dbReference type="SUPFAM" id="SSF54211">
    <property type="entry name" value="Ribosomal protein S5 domain 2-like"/>
    <property type="match status" value="1"/>
</dbReference>
<organism>
    <name type="scientific">Clostridium botulinum (strain Alaska E43 / Type E3)</name>
    <dbReference type="NCBI Taxonomy" id="508767"/>
    <lineage>
        <taxon>Bacteria</taxon>
        <taxon>Bacillati</taxon>
        <taxon>Bacillota</taxon>
        <taxon>Clostridia</taxon>
        <taxon>Eubacteriales</taxon>
        <taxon>Clostridiaceae</taxon>
        <taxon>Clostridium</taxon>
    </lineage>
</organism>
<comment type="function">
    <text evidence="1">RNaseP catalyzes the removal of the 5'-leader sequence from pre-tRNA to produce the mature 5'-terminus. It can also cleave other RNA substrates such as 4.5S RNA. The protein component plays an auxiliary but essential role in vivo by binding to the 5'-leader sequence and broadening the substrate specificity of the ribozyme.</text>
</comment>
<comment type="catalytic activity">
    <reaction evidence="1">
        <text>Endonucleolytic cleavage of RNA, removing 5'-extranucleotides from tRNA precursor.</text>
        <dbReference type="EC" id="3.1.26.5"/>
    </reaction>
</comment>
<comment type="subunit">
    <text evidence="1">Consists of a catalytic RNA component (M1 or rnpB) and a protein subunit.</text>
</comment>
<comment type="similarity">
    <text evidence="1">Belongs to the RnpA family.</text>
</comment>
<proteinExistence type="inferred from homology"/>
<evidence type="ECO:0000255" key="1">
    <source>
        <dbReference type="HAMAP-Rule" id="MF_00227"/>
    </source>
</evidence>